<feature type="chain" id="PRO_0000078673" description="97 kDa heat shock protein">
    <location>
        <begin position="1"/>
        <end position="889"/>
    </location>
</feature>
<feature type="region of interest" description="Disordered" evidence="1">
    <location>
        <begin position="504"/>
        <end position="622"/>
    </location>
</feature>
<feature type="region of interest" description="Disordered" evidence="1">
    <location>
        <begin position="812"/>
        <end position="889"/>
    </location>
</feature>
<feature type="compositionally biased region" description="Basic and acidic residues" evidence="1">
    <location>
        <begin position="549"/>
        <end position="585"/>
    </location>
</feature>
<feature type="compositionally biased region" description="Polar residues" evidence="1">
    <location>
        <begin position="586"/>
        <end position="597"/>
    </location>
</feature>
<feature type="compositionally biased region" description="Basic and acidic residues" evidence="1">
    <location>
        <begin position="869"/>
        <end position="889"/>
    </location>
</feature>
<evidence type="ECO:0000256" key="1">
    <source>
        <dbReference type="SAM" id="MobiDB-lite"/>
    </source>
</evidence>
<evidence type="ECO:0000305" key="2"/>
<evidence type="ECO:0000305" key="3">
    <source>
    </source>
</evidence>
<comment type="function">
    <text>Cell surface recognition protein that binds acrosome-reacted sperm and thereby mediates binding and subsequent fusion of the sperm and egg.</text>
</comment>
<comment type="similarity">
    <text evidence="2">Belongs to the heat shock protein 70 family.</text>
</comment>
<comment type="caution">
    <text evidence="3">Was originally (PubMed:8383878) thought to have a N-terminal sequence signal and a C-terminal transmembrane region. Both domains do not exist in the revised sequence.</text>
</comment>
<proteinExistence type="evidence at protein level"/>
<protein>
    <recommendedName>
        <fullName>97 kDa heat shock protein</fullName>
    </recommendedName>
    <alternativeName>
        <fullName>Egg sperm receptor</fullName>
    </alternativeName>
</protein>
<keyword id="KW-0067">ATP-binding</keyword>
<keyword id="KW-0903">Direct protein sequencing</keyword>
<keyword id="KW-0547">Nucleotide-binding</keyword>
<keyword id="KW-1185">Reference proteome</keyword>
<reference key="1">
    <citation type="journal article" date="1993" name="Science">
        <title>Sea urchin egg receptor for sperm: sequence similarity of binding domain and hsp70.</title>
        <authorList>
            <person name="Foltz K.R."/>
            <person name="Partin J.S."/>
            <person name="Lennarz W.J."/>
        </authorList>
    </citation>
    <scope>NUCLEOTIDE SEQUENCE [MRNA]</scope>
    <scope>PROTEIN SEQUENCE OF 154-169 AND 481-495</scope>
    <source>
        <tissue>Ovary</tissue>
    </source>
</reference>
<reference key="2">
    <citation type="submission" date="1996-09" db="EMBL/GenBank/DDBJ databases">
        <authorList>
            <person name="Lennarz W.J."/>
        </authorList>
    </citation>
    <scope>SEQUENCE REVISION</scope>
</reference>
<dbReference type="EMBL" id="L04969">
    <property type="protein sequence ID" value="AAB09737.1"/>
    <property type="molecule type" value="mRNA"/>
</dbReference>
<dbReference type="PIR" id="T11742">
    <property type="entry name" value="T11742"/>
</dbReference>
<dbReference type="SMR" id="Q06068"/>
<dbReference type="FunCoup" id="Q06068">
    <property type="interactions" value="2811"/>
</dbReference>
<dbReference type="STRING" id="7668.Q06068"/>
<dbReference type="eggNOG" id="KOG0103">
    <property type="taxonomic scope" value="Eukaryota"/>
</dbReference>
<dbReference type="HOGENOM" id="CLU_005965_5_1_1"/>
<dbReference type="InParanoid" id="Q06068"/>
<dbReference type="Proteomes" id="UP000007110">
    <property type="component" value="Unassembled WGS sequence"/>
</dbReference>
<dbReference type="GO" id="GO:0005829">
    <property type="term" value="C:cytosol"/>
    <property type="evidence" value="ECO:0000318"/>
    <property type="project" value="GO_Central"/>
</dbReference>
<dbReference type="GO" id="GO:0005634">
    <property type="term" value="C:nucleus"/>
    <property type="evidence" value="ECO:0000318"/>
    <property type="project" value="GO_Central"/>
</dbReference>
<dbReference type="GO" id="GO:0000774">
    <property type="term" value="F:adenyl-nucleotide exchange factor activity"/>
    <property type="evidence" value="ECO:0000318"/>
    <property type="project" value="GO_Central"/>
</dbReference>
<dbReference type="GO" id="GO:0005524">
    <property type="term" value="F:ATP binding"/>
    <property type="evidence" value="ECO:0007669"/>
    <property type="project" value="UniProtKB-KW"/>
</dbReference>
<dbReference type="GO" id="GO:0140662">
    <property type="term" value="F:ATP-dependent protein folding chaperone"/>
    <property type="evidence" value="ECO:0007669"/>
    <property type="project" value="InterPro"/>
</dbReference>
<dbReference type="GO" id="GO:0006457">
    <property type="term" value="P:protein folding"/>
    <property type="evidence" value="ECO:0000318"/>
    <property type="project" value="GO_Central"/>
</dbReference>
<dbReference type="CDD" id="cd10228">
    <property type="entry name" value="ASKHA_NBD_HSP70_HSPA4_like"/>
    <property type="match status" value="1"/>
</dbReference>
<dbReference type="FunFam" id="2.60.34.10:FF:000047">
    <property type="entry name" value="97 kDa heat shock protein"/>
    <property type="match status" value="1"/>
</dbReference>
<dbReference type="FunFam" id="1.20.1270.10:FF:000002">
    <property type="entry name" value="Heat shock 70 kDa protein 4"/>
    <property type="match status" value="1"/>
</dbReference>
<dbReference type="FunFam" id="3.30.30.30:FF:000002">
    <property type="entry name" value="Heat shock 70 kDa protein 4"/>
    <property type="match status" value="1"/>
</dbReference>
<dbReference type="FunFam" id="3.30.420.40:FF:000171">
    <property type="entry name" value="Heat shock 70 kDa protein 4"/>
    <property type="match status" value="1"/>
</dbReference>
<dbReference type="FunFam" id="3.90.640.10:FF:000004">
    <property type="entry name" value="Heat shock 70 kDa protein 4"/>
    <property type="match status" value="1"/>
</dbReference>
<dbReference type="FunFam" id="3.30.420.40:FF:000495">
    <property type="entry name" value="Heat shock protein 4b"/>
    <property type="match status" value="1"/>
</dbReference>
<dbReference type="Gene3D" id="1.20.1270.10">
    <property type="match status" value="1"/>
</dbReference>
<dbReference type="Gene3D" id="3.30.30.30">
    <property type="match status" value="1"/>
</dbReference>
<dbReference type="Gene3D" id="3.30.420.40">
    <property type="match status" value="2"/>
</dbReference>
<dbReference type="Gene3D" id="3.90.640.10">
    <property type="entry name" value="Actin, Chain A, domain 4"/>
    <property type="match status" value="1"/>
</dbReference>
<dbReference type="Gene3D" id="2.60.34.10">
    <property type="entry name" value="Substrate Binding Domain Of DNAk, Chain A, domain 1"/>
    <property type="match status" value="1"/>
</dbReference>
<dbReference type="InterPro" id="IPR043129">
    <property type="entry name" value="ATPase_NBD"/>
</dbReference>
<dbReference type="InterPro" id="IPR018181">
    <property type="entry name" value="Heat_shock_70_CS"/>
</dbReference>
<dbReference type="InterPro" id="IPR029048">
    <property type="entry name" value="HSP70_C_sf"/>
</dbReference>
<dbReference type="InterPro" id="IPR029047">
    <property type="entry name" value="HSP70_peptide-bd_sf"/>
</dbReference>
<dbReference type="InterPro" id="IPR013126">
    <property type="entry name" value="Hsp_70_fam"/>
</dbReference>
<dbReference type="PANTHER" id="PTHR45639:SF4">
    <property type="entry name" value="HSC70CB, ISOFORM G"/>
    <property type="match status" value="1"/>
</dbReference>
<dbReference type="PANTHER" id="PTHR45639">
    <property type="entry name" value="HSC70CB, ISOFORM G-RELATED"/>
    <property type="match status" value="1"/>
</dbReference>
<dbReference type="Pfam" id="PF00012">
    <property type="entry name" value="HSP70"/>
    <property type="match status" value="2"/>
</dbReference>
<dbReference type="PRINTS" id="PR00301">
    <property type="entry name" value="HEATSHOCK70"/>
</dbReference>
<dbReference type="SUPFAM" id="SSF53067">
    <property type="entry name" value="Actin-like ATPase domain"/>
    <property type="match status" value="2"/>
</dbReference>
<dbReference type="SUPFAM" id="SSF100934">
    <property type="entry name" value="Heat shock protein 70kD (HSP70), C-terminal subdomain"/>
    <property type="match status" value="2"/>
</dbReference>
<dbReference type="SUPFAM" id="SSF100920">
    <property type="entry name" value="Heat shock protein 70kD (HSP70), peptide-binding domain"/>
    <property type="match status" value="1"/>
</dbReference>
<dbReference type="PROSITE" id="PS01036">
    <property type="entry name" value="HSP70_3"/>
    <property type="match status" value="1"/>
</dbReference>
<sequence length="889" mass="98619">MSVVGFDVGNLSSYIAVARGGGIETMANEYSDRLTPSVVSFGEKSRTQGHAARSQAITNYKNTLSQFKRFIARRFSDPSVQKDAKVVPYKITQLPNGNVGMQVQYLGETETFTPEQIYAMILTKLKSTAEINLCRKVVDCVISVPQYYTDLERRGVIHAAEIAGLNCLRVISDTTAVALAYGIYKQDLPTPEEKPRNVVFVDCGHSSLQVSVCAFNKGKLKVLANASDKNLGGRDFDWLLAEHFAVDFQTRYKMDVKSNQRAWLRLMAECDKTKKLMSANATLISMNIECIMNDRDVSGKISRADFEALAAELLKRVEVPLKSVLEQTKLKPEDIHSIEIVGGSSRIPSIKETIKKVFKKECSTTLNQDEAVARGCALQCAILSPTFKVRDFTVTDLTPYPIELEWKGTEGEDGSMEVSSKNHQAPFSKMLTFYRKAPFELVARYADPNLPIPERRIGRFKINGVFPTTEGESSKIKVKVRVDGHGIFNVASASLIEKLPVQAEDAMEDGSPEENGPSKEEGSGASQAENDAPMDQSPVQGGAGEGEASADKEEQADNGSKETSKDSKDQTSESSKSDKESKDQNSEGSKSDNSSTETDAKAAKKTKKTIKTHELSITATTDELSITEVNNFFEKEGKLIAHDRLEKEKNDAKNAVEEYVYEMREKLCDKFEQYISEKERGSFSKLLEETENWLYEDGEDETKSVYQTKINSLKKIGDPVENRFKENLERPGAFEDFGKALVPYIKTLDLYSNGDEKYSHIEKEDMAKVEKCVKEKVAWRDSKVNAQNQKAPHQDPVVTAAQIRSEIQSMKFVCDPIINKPKPKPKEEPPKDNGPTPEEAAKDGGPAPPTTEGGEEKMDTSDQAPTGEASKEGETKPDETKPDVEMELD</sequence>
<accession>Q06068</accession>
<accession>Q94761</accession>
<name>HSP97_STRPU</name>
<organism>
    <name type="scientific">Strongylocentrotus purpuratus</name>
    <name type="common">Purple sea urchin</name>
    <dbReference type="NCBI Taxonomy" id="7668"/>
    <lineage>
        <taxon>Eukaryota</taxon>
        <taxon>Metazoa</taxon>
        <taxon>Echinodermata</taxon>
        <taxon>Eleutherozoa</taxon>
        <taxon>Echinozoa</taxon>
        <taxon>Echinoidea</taxon>
        <taxon>Euechinoidea</taxon>
        <taxon>Echinacea</taxon>
        <taxon>Camarodonta</taxon>
        <taxon>Echinidea</taxon>
        <taxon>Strongylocentrotidae</taxon>
        <taxon>Strongylocentrotus</taxon>
    </lineage>
</organism>